<organism>
    <name type="scientific">Xenopus laevis</name>
    <name type="common">African clawed frog</name>
    <dbReference type="NCBI Taxonomy" id="8355"/>
    <lineage>
        <taxon>Eukaryota</taxon>
        <taxon>Metazoa</taxon>
        <taxon>Chordata</taxon>
        <taxon>Craniata</taxon>
        <taxon>Vertebrata</taxon>
        <taxon>Euteleostomi</taxon>
        <taxon>Amphibia</taxon>
        <taxon>Batrachia</taxon>
        <taxon>Anura</taxon>
        <taxon>Pipoidea</taxon>
        <taxon>Pipidae</taxon>
        <taxon>Xenopodinae</taxon>
        <taxon>Xenopus</taxon>
        <taxon>Xenopus</taxon>
    </lineage>
</organism>
<comment type="function">
    <text evidence="1 2">The B regulatory subunit might modulate substrate selectivity and catalytic activity, and might also direct the localization of the catalytic enzyme to a particular subcellular compartment (By similarity). Negatively controls the initiation of oocyte maturation.</text>
</comment>
<comment type="subunit">
    <text evidence="1">PP2A consists of a common heterodimeric core enzyme, composed of a 36 kDa catalytic subunit (subunit C) and a 65 kDa constant regulatory subunit (PR65 or subunit A), that associates with a variety of regulatory subunits.</text>
</comment>
<comment type="subcellular location">
    <subcellularLocation>
        <location evidence="1">Cytoplasm</location>
    </subcellularLocation>
    <subcellularLocation>
        <location evidence="1">Cytoplasm</location>
        <location evidence="1">Cytoskeleton</location>
    </subcellularLocation>
    <subcellularLocation>
        <location evidence="1">Membrane</location>
    </subcellularLocation>
</comment>
<comment type="similarity">
    <text evidence="3">Belongs to the phosphatase 2A regulatory subunit B family.</text>
</comment>
<comment type="caution">
    <text evidence="3">It is uncertain whether Met-1 or Met-19 is the initiator.</text>
</comment>
<comment type="sequence caution" evidence="3">
    <conflict type="erroneous initiation">
        <sequence resource="EMBL-CDS" id="AAI30185"/>
    </conflict>
</comment>
<sequence>MPCSVEDKTGLCGSRYSVMIPELQESVIFSEDSRHYNEKQTRRQRKSSADIISTVEFNNTGELLATGDKGGRVVIFQREQENKNQPHRRGEYNVYSTFQSHEPEFDYLKSLEIEEKINKIRWLPQQNAAYFLLSTNDKTVKLWKVSERDKRPEGYNLKDEEGRIRDPCTITSLRVPVLRPMDLMVEATPRRVFSNAHTYHINSISVNSDYETYMSADDLRINLWNLEITNRSFNIVDIKPTNMEELTEVITAAEFHPHNCNTFVYSSSKGTIRLCDMRSSALCDKHSKLFEEPEDPSNRSFFSEIISSISDVKFNHSGRYIMTRDYLTVKVWDLNMENRPIETYQVHDYLRSKLCSLYENDCIFDKFECVWNGSDSVIMTGSYNNFFRMFDRNTKRDVTLEASRENSKPRAILKPRKVCVGGKRRKDEISVDSLDFSKKILHTAWHPSENIIAVAATNNLYIFQDKVN</sequence>
<feature type="chain" id="PRO_0000383349" description="Serine/threonine-protein phosphatase 2A 55 kDa regulatory subunit B beta isoform">
    <location>
        <begin position="1"/>
        <end position="468"/>
    </location>
</feature>
<feature type="repeat" description="WD 1">
    <location>
        <begin position="47"/>
        <end position="86"/>
    </location>
</feature>
<feature type="repeat" description="WD 2">
    <location>
        <begin position="112"/>
        <end position="153"/>
    </location>
</feature>
<feature type="repeat" description="WD 3">
    <location>
        <begin position="196"/>
        <end position="234"/>
    </location>
</feature>
<feature type="repeat" description="WD 4">
    <location>
        <begin position="245"/>
        <end position="285"/>
    </location>
</feature>
<feature type="repeat" description="WD 5">
    <location>
        <begin position="304"/>
        <end position="342"/>
    </location>
</feature>
<feature type="repeat" description="WD 6">
    <location>
        <begin position="359"/>
        <end position="400"/>
    </location>
</feature>
<feature type="repeat" description="WD 7">
    <location>
        <begin position="435"/>
        <end position="468"/>
    </location>
</feature>
<reference key="1">
    <citation type="journal article" date="1997" name="Biochem. Biophys. Res. Commun.">
        <title>cDNA cloning of a novel B subunit of Xenopus protein phosphatase 2A and its biological activity in oocytes.</title>
        <authorList>
            <person name="Iwashita J."/>
            <person name="Shima H."/>
            <person name="Nagao M."/>
            <person name="Sagata N."/>
        </authorList>
    </citation>
    <scope>NUCLEOTIDE SEQUENCE [MRNA]</scope>
    <scope>FUNCTION</scope>
    <source>
        <tissue>Ovary</tissue>
    </source>
</reference>
<reference key="2">
    <citation type="submission" date="2006-12" db="EMBL/GenBank/DDBJ databases">
        <authorList>
            <consortium name="NIH - Xenopus Gene Collection (XGC) project"/>
        </authorList>
    </citation>
    <scope>NUCLEOTIDE SEQUENCE [LARGE SCALE MRNA]</scope>
    <source>
        <tissue>Oocyte</tissue>
    </source>
</reference>
<keyword id="KW-0963">Cytoplasm</keyword>
<keyword id="KW-0206">Cytoskeleton</keyword>
<keyword id="KW-0472">Membrane</keyword>
<keyword id="KW-1185">Reference proteome</keyword>
<keyword id="KW-0677">Repeat</keyword>
<keyword id="KW-0853">WD repeat</keyword>
<evidence type="ECO:0000250" key="1"/>
<evidence type="ECO:0000269" key="2">
    <source>
    </source>
</evidence>
<evidence type="ECO:0000305" key="3"/>
<accession>A1L3L9</accession>
<accession>P87345</accession>
<name>2ABB_XENLA</name>
<gene>
    <name type="primary">ppp2r2b</name>
    <name type="synonym">ppp2r2b-a</name>
    <name type="synonym">ppp2r2c</name>
</gene>
<dbReference type="EMBL" id="AB000406">
    <property type="protein sequence ID" value="BAA19100.1"/>
    <property type="molecule type" value="mRNA"/>
</dbReference>
<dbReference type="EMBL" id="BC130184">
    <property type="protein sequence ID" value="AAI30185.1"/>
    <property type="status" value="ALT_INIT"/>
    <property type="molecule type" value="mRNA"/>
</dbReference>
<dbReference type="RefSeq" id="NP_001080956.1">
    <property type="nucleotide sequence ID" value="NM_001087487.1"/>
</dbReference>
<dbReference type="SMR" id="A1L3L9"/>
<dbReference type="BioGRID" id="98903">
    <property type="interactions" value="131"/>
</dbReference>
<dbReference type="IntAct" id="A1L3L9">
    <property type="interactions" value="1"/>
</dbReference>
<dbReference type="MINT" id="A1L3L9"/>
<dbReference type="GeneID" id="394301"/>
<dbReference type="KEGG" id="xla:394301"/>
<dbReference type="AGR" id="Xenbase:XB-GENE-946386"/>
<dbReference type="CTD" id="394301"/>
<dbReference type="Xenbase" id="XB-GENE-946386">
    <property type="gene designation" value="ppp2r2b.L"/>
</dbReference>
<dbReference type="OrthoDB" id="6274823at2759"/>
<dbReference type="Proteomes" id="UP000186698">
    <property type="component" value="Chromosome 3L"/>
</dbReference>
<dbReference type="Bgee" id="394301">
    <property type="expression patterns" value="Expressed in egg cell and 19 other cell types or tissues"/>
</dbReference>
<dbReference type="GO" id="GO:0005856">
    <property type="term" value="C:cytoskeleton"/>
    <property type="evidence" value="ECO:0007669"/>
    <property type="project" value="UniProtKB-SubCell"/>
</dbReference>
<dbReference type="GO" id="GO:0005829">
    <property type="term" value="C:cytosol"/>
    <property type="evidence" value="ECO:0000318"/>
    <property type="project" value="GO_Central"/>
</dbReference>
<dbReference type="GO" id="GO:0016020">
    <property type="term" value="C:membrane"/>
    <property type="evidence" value="ECO:0007669"/>
    <property type="project" value="UniProtKB-SubCell"/>
</dbReference>
<dbReference type="GO" id="GO:0000159">
    <property type="term" value="C:protein phosphatase type 2A complex"/>
    <property type="evidence" value="ECO:0000318"/>
    <property type="project" value="GO_Central"/>
</dbReference>
<dbReference type="GO" id="GO:0019888">
    <property type="term" value="F:protein phosphatase regulator activity"/>
    <property type="evidence" value="ECO:0000318"/>
    <property type="project" value="GO_Central"/>
</dbReference>
<dbReference type="FunFam" id="2.130.10.10:FF:000002">
    <property type="entry name" value="Serine/threonine-protein phosphatase 2A 55 kDa regulatory subunit B"/>
    <property type="match status" value="1"/>
</dbReference>
<dbReference type="Gene3D" id="2.130.10.10">
    <property type="entry name" value="YVTN repeat-like/Quinoprotein amine dehydrogenase"/>
    <property type="match status" value="1"/>
</dbReference>
<dbReference type="InterPro" id="IPR000009">
    <property type="entry name" value="PP2A_PR55"/>
</dbReference>
<dbReference type="InterPro" id="IPR018067">
    <property type="entry name" value="PP2A_PR55_CS"/>
</dbReference>
<dbReference type="InterPro" id="IPR015943">
    <property type="entry name" value="WD40/YVTN_repeat-like_dom_sf"/>
</dbReference>
<dbReference type="InterPro" id="IPR036322">
    <property type="entry name" value="WD40_repeat_dom_sf"/>
</dbReference>
<dbReference type="InterPro" id="IPR001680">
    <property type="entry name" value="WD40_rpt"/>
</dbReference>
<dbReference type="PANTHER" id="PTHR11871">
    <property type="entry name" value="PROTEIN PHOSPHATASE PP2A REGULATORY SUBUNIT B"/>
    <property type="match status" value="1"/>
</dbReference>
<dbReference type="PIRSF" id="PIRSF037309">
    <property type="entry name" value="PP2A_PR55"/>
    <property type="match status" value="1"/>
</dbReference>
<dbReference type="PRINTS" id="PR00600">
    <property type="entry name" value="PP2APR55"/>
</dbReference>
<dbReference type="SMART" id="SM00320">
    <property type="entry name" value="WD40"/>
    <property type="match status" value="6"/>
</dbReference>
<dbReference type="SUPFAM" id="SSF50978">
    <property type="entry name" value="WD40 repeat-like"/>
    <property type="match status" value="1"/>
</dbReference>
<dbReference type="PROSITE" id="PS01024">
    <property type="entry name" value="PR55_1"/>
    <property type="match status" value="1"/>
</dbReference>
<dbReference type="PROSITE" id="PS01025">
    <property type="entry name" value="PR55_2"/>
    <property type="match status" value="1"/>
</dbReference>
<dbReference type="PROSITE" id="PS00678">
    <property type="entry name" value="WD_REPEATS_1"/>
    <property type="match status" value="1"/>
</dbReference>
<proteinExistence type="evidence at transcript level"/>
<protein>
    <recommendedName>
        <fullName>Serine/threonine-protein phosphatase 2A 55 kDa regulatory subunit B beta isoform</fullName>
    </recommendedName>
    <alternativeName>
        <fullName>PP2A subunit B isoform B55-beta</fullName>
    </alternativeName>
    <alternativeName>
        <fullName>PP2A subunit B isoform PR55-beta</fullName>
    </alternativeName>
    <alternativeName>
        <fullName>PP2A subunit B isoform R2-beta</fullName>
    </alternativeName>
    <alternativeName>
        <fullName>PP2A subunit B isoform beta</fullName>
    </alternativeName>
</protein>